<dbReference type="EC" id="3.1.3.11" evidence="1"/>
<dbReference type="EMBL" id="AF211846">
    <property type="protein sequence ID" value="AAF25375.1"/>
    <property type="molecule type" value="Genomic_DNA"/>
</dbReference>
<dbReference type="EMBL" id="CP000739">
    <property type="protein sequence ID" value="ABR62730.1"/>
    <property type="molecule type" value="Genomic_DNA"/>
</dbReference>
<dbReference type="RefSeq" id="WP_011969552.1">
    <property type="nucleotide sequence ID" value="NC_009620.1"/>
</dbReference>
<dbReference type="RefSeq" id="YP_001312663.1">
    <property type="nucleotide sequence ID" value="NC_009620.1"/>
</dbReference>
<dbReference type="SMR" id="P56886"/>
<dbReference type="KEGG" id="smd:Smed_3920"/>
<dbReference type="PATRIC" id="fig|366394.8.peg.366"/>
<dbReference type="HOGENOM" id="CLU_039977_0_0_5"/>
<dbReference type="OrthoDB" id="9806756at2"/>
<dbReference type="UniPathway" id="UPA00138"/>
<dbReference type="Proteomes" id="UP000001108">
    <property type="component" value="Plasmid pSMED01"/>
</dbReference>
<dbReference type="GO" id="GO:0005829">
    <property type="term" value="C:cytosol"/>
    <property type="evidence" value="ECO:0007669"/>
    <property type="project" value="TreeGrafter"/>
</dbReference>
<dbReference type="GO" id="GO:0042132">
    <property type="term" value="F:fructose 1,6-bisphosphate 1-phosphatase activity"/>
    <property type="evidence" value="ECO:0007669"/>
    <property type="project" value="UniProtKB-UniRule"/>
</dbReference>
<dbReference type="GO" id="GO:0000287">
    <property type="term" value="F:magnesium ion binding"/>
    <property type="evidence" value="ECO:0007669"/>
    <property type="project" value="UniProtKB-UniRule"/>
</dbReference>
<dbReference type="GO" id="GO:0030388">
    <property type="term" value="P:fructose 1,6-bisphosphate metabolic process"/>
    <property type="evidence" value="ECO:0007669"/>
    <property type="project" value="TreeGrafter"/>
</dbReference>
<dbReference type="GO" id="GO:0006002">
    <property type="term" value="P:fructose 6-phosphate metabolic process"/>
    <property type="evidence" value="ECO:0007669"/>
    <property type="project" value="TreeGrafter"/>
</dbReference>
<dbReference type="GO" id="GO:0006000">
    <property type="term" value="P:fructose metabolic process"/>
    <property type="evidence" value="ECO:0007669"/>
    <property type="project" value="TreeGrafter"/>
</dbReference>
<dbReference type="GO" id="GO:0006094">
    <property type="term" value="P:gluconeogenesis"/>
    <property type="evidence" value="ECO:0007669"/>
    <property type="project" value="UniProtKB-UniRule"/>
</dbReference>
<dbReference type="GO" id="GO:0005986">
    <property type="term" value="P:sucrose biosynthetic process"/>
    <property type="evidence" value="ECO:0007669"/>
    <property type="project" value="TreeGrafter"/>
</dbReference>
<dbReference type="CDD" id="cd00354">
    <property type="entry name" value="FBPase"/>
    <property type="match status" value="1"/>
</dbReference>
<dbReference type="FunFam" id="3.40.190.80:FF:000011">
    <property type="entry name" value="Fructose-1,6-bisphosphatase class 1"/>
    <property type="match status" value="1"/>
</dbReference>
<dbReference type="Gene3D" id="3.40.190.80">
    <property type="match status" value="1"/>
</dbReference>
<dbReference type="Gene3D" id="3.30.540.10">
    <property type="entry name" value="Fructose-1,6-Bisphosphatase, subunit A, domain 1"/>
    <property type="match status" value="1"/>
</dbReference>
<dbReference type="HAMAP" id="MF_01855">
    <property type="entry name" value="FBPase_class1"/>
    <property type="match status" value="1"/>
</dbReference>
<dbReference type="InterPro" id="IPR044015">
    <property type="entry name" value="FBPase_C_dom"/>
</dbReference>
<dbReference type="InterPro" id="IPR000146">
    <property type="entry name" value="FBPase_class-1"/>
</dbReference>
<dbReference type="InterPro" id="IPR033391">
    <property type="entry name" value="FBPase_N"/>
</dbReference>
<dbReference type="InterPro" id="IPR028343">
    <property type="entry name" value="FBPtase"/>
</dbReference>
<dbReference type="InterPro" id="IPR020548">
    <property type="entry name" value="Fructose_bisphosphatase_AS"/>
</dbReference>
<dbReference type="NCBIfam" id="NF006779">
    <property type="entry name" value="PRK09293.1-3"/>
    <property type="match status" value="1"/>
</dbReference>
<dbReference type="NCBIfam" id="NF006780">
    <property type="entry name" value="PRK09293.1-4"/>
    <property type="match status" value="1"/>
</dbReference>
<dbReference type="PANTHER" id="PTHR11556">
    <property type="entry name" value="FRUCTOSE-1,6-BISPHOSPHATASE-RELATED"/>
    <property type="match status" value="1"/>
</dbReference>
<dbReference type="PANTHER" id="PTHR11556:SF35">
    <property type="entry name" value="SEDOHEPTULOSE-1,7-BISPHOSPHATASE, CHLOROPLASTIC"/>
    <property type="match status" value="1"/>
</dbReference>
<dbReference type="Pfam" id="PF00316">
    <property type="entry name" value="FBPase"/>
    <property type="match status" value="1"/>
</dbReference>
<dbReference type="Pfam" id="PF18913">
    <property type="entry name" value="FBPase_C"/>
    <property type="match status" value="1"/>
</dbReference>
<dbReference type="PIRSF" id="PIRSF500210">
    <property type="entry name" value="FBPtase"/>
    <property type="match status" value="1"/>
</dbReference>
<dbReference type="PIRSF" id="PIRSF000904">
    <property type="entry name" value="FBPtase_SBPase"/>
    <property type="match status" value="1"/>
</dbReference>
<dbReference type="PRINTS" id="PR00115">
    <property type="entry name" value="F16BPHPHTASE"/>
</dbReference>
<dbReference type="SUPFAM" id="SSF56655">
    <property type="entry name" value="Carbohydrate phosphatase"/>
    <property type="match status" value="1"/>
</dbReference>
<dbReference type="PROSITE" id="PS00124">
    <property type="entry name" value="FBPASE"/>
    <property type="match status" value="1"/>
</dbReference>
<feature type="chain" id="PRO_0000200485" description="Fructose-1,6-bisphosphatase class 1">
    <location>
        <begin position="1"/>
        <end position="349"/>
    </location>
</feature>
<feature type="binding site" evidence="1">
    <location>
        <position position="91"/>
    </location>
    <ligand>
        <name>Mg(2+)</name>
        <dbReference type="ChEBI" id="CHEBI:18420"/>
        <label>1</label>
    </ligand>
</feature>
<feature type="binding site" evidence="1">
    <location>
        <position position="110"/>
    </location>
    <ligand>
        <name>Mg(2+)</name>
        <dbReference type="ChEBI" id="CHEBI:18420"/>
        <label>1</label>
    </ligand>
</feature>
<feature type="binding site" evidence="1">
    <location>
        <position position="110"/>
    </location>
    <ligand>
        <name>Mg(2+)</name>
        <dbReference type="ChEBI" id="CHEBI:18420"/>
        <label>2</label>
    </ligand>
</feature>
<feature type="binding site" evidence="1">
    <location>
        <position position="112"/>
    </location>
    <ligand>
        <name>Mg(2+)</name>
        <dbReference type="ChEBI" id="CHEBI:18420"/>
        <label>1</label>
    </ligand>
</feature>
<feature type="binding site" evidence="1">
    <location>
        <begin position="113"/>
        <end position="116"/>
    </location>
    <ligand>
        <name>substrate</name>
    </ligand>
</feature>
<feature type="binding site" evidence="1">
    <location>
        <position position="113"/>
    </location>
    <ligand>
        <name>Mg(2+)</name>
        <dbReference type="ChEBI" id="CHEBI:18420"/>
        <label>2</label>
    </ligand>
</feature>
<feature type="binding site" evidence="1">
    <location>
        <position position="205"/>
    </location>
    <ligand>
        <name>substrate</name>
    </ligand>
</feature>
<feature type="binding site" evidence="1">
    <location>
        <position position="277"/>
    </location>
    <ligand>
        <name>Mg(2+)</name>
        <dbReference type="ChEBI" id="CHEBI:18420"/>
        <label>2</label>
    </ligand>
</feature>
<feature type="sequence conflict" description="In Ref. 1; AAF25375." evidence="2" ref="1">
    <original>Q</original>
    <variation>H</variation>
    <location>
        <position position="143"/>
    </location>
</feature>
<feature type="sequence conflict" description="In Ref. 1; AAF25375." evidence="2" ref="1">
    <original>E</original>
    <variation>D</variation>
    <location>
        <position position="175"/>
    </location>
</feature>
<feature type="sequence conflict" description="In Ref. 1; AAF25375." evidence="2" ref="1">
    <original>A</original>
    <variation>G</variation>
    <location>
        <position position="322"/>
    </location>
</feature>
<evidence type="ECO:0000255" key="1">
    <source>
        <dbReference type="HAMAP-Rule" id="MF_01855"/>
    </source>
</evidence>
<evidence type="ECO:0000305" key="2"/>
<reference key="1">
    <citation type="submission" date="1999-12" db="EMBL/GenBank/DDBJ databases">
        <title>Genetic regulation of C1 metabolism in Sinorhizobium meliloti.</title>
        <authorList>
            <person name="Fenner B.J."/>
            <person name="Tiwari R.P."/>
            <person name="Dilworth M.J."/>
        </authorList>
    </citation>
    <scope>NUCLEOTIDE SEQUENCE [GENOMIC DNA]</scope>
</reference>
<reference key="2">
    <citation type="submission" date="2007-06" db="EMBL/GenBank/DDBJ databases">
        <title>Complete sequence of Sinorhizobium medicae WSM419 plasmid pSMED01.</title>
        <authorList>
            <consortium name="US DOE Joint Genome Institute"/>
            <person name="Copeland A."/>
            <person name="Lucas S."/>
            <person name="Lapidus A."/>
            <person name="Barry K."/>
            <person name="Glavina del Rio T."/>
            <person name="Dalin E."/>
            <person name="Tice H."/>
            <person name="Pitluck S."/>
            <person name="Chain P."/>
            <person name="Malfatti S."/>
            <person name="Shin M."/>
            <person name="Vergez L."/>
            <person name="Schmutz J."/>
            <person name="Larimer F."/>
            <person name="Land M."/>
            <person name="Hauser L."/>
            <person name="Kyrpides N."/>
            <person name="Mikhailova N."/>
            <person name="Reeve W.G."/>
            <person name="Richardson P."/>
        </authorList>
    </citation>
    <scope>NUCLEOTIDE SEQUENCE [LARGE SCALE GENOMIC DNA]</scope>
    <source>
        <strain>WSM419</strain>
    </source>
</reference>
<protein>
    <recommendedName>
        <fullName evidence="1">Fructose-1,6-bisphosphatase class 1</fullName>
        <shortName evidence="1">FBPase class 1</shortName>
        <ecNumber evidence="1">3.1.3.11</ecNumber>
    </recommendedName>
    <alternativeName>
        <fullName evidence="1">D-fructose-1,6-bisphosphate 1-phosphohydrolase class 1</fullName>
    </alternativeName>
</protein>
<accession>P56886</accession>
<accession>A6UGF0</accession>
<sequence length="349" mass="37999">MSGATLEAYLASCTTHGDELSRDVAAVIQRLAKAALDIRKLVNQGALGTVFNGMHSGSNTDGDVQKDLDILCDDQFLSCLQGAPVACYASEELENPVLLDPAARLAVAIDPLDGSSNIDNNISIGTIFSVLPAAKGPDVDPSQSFLQPGNRQLAAGFFVYGPQTALVLSLGRGTEIFIFSSRLGCFVDAYKSVGIPDRANEFAINMSNYRHWEEAIRLYVDDCLAGSEGPRERDFNMRWIASLVAEAYRILVRGGIFLYPADSRKGYSHGRIRLVYEANPIAFIVENAGGSATTSVDRILDLVPESLHQRVPLVFGSRREVARITRYHVDPNMIGERAPLFGKRGLFRA</sequence>
<geneLocation type="plasmid">
    <name>pSMED01</name>
</geneLocation>
<gene>
    <name evidence="1" type="primary">fbp</name>
    <name type="synonym">cbbF</name>
    <name type="ordered locus">Smed_3920</name>
</gene>
<proteinExistence type="inferred from homology"/>
<comment type="catalytic activity">
    <reaction evidence="1">
        <text>beta-D-fructose 1,6-bisphosphate + H2O = beta-D-fructose 6-phosphate + phosphate</text>
        <dbReference type="Rhea" id="RHEA:11064"/>
        <dbReference type="ChEBI" id="CHEBI:15377"/>
        <dbReference type="ChEBI" id="CHEBI:32966"/>
        <dbReference type="ChEBI" id="CHEBI:43474"/>
        <dbReference type="ChEBI" id="CHEBI:57634"/>
        <dbReference type="EC" id="3.1.3.11"/>
    </reaction>
</comment>
<comment type="cofactor">
    <cofactor evidence="1">
        <name>Mg(2+)</name>
        <dbReference type="ChEBI" id="CHEBI:18420"/>
    </cofactor>
    <text evidence="1">Binds 2 magnesium ions per subunit.</text>
</comment>
<comment type="pathway">
    <text evidence="1">Carbohydrate biosynthesis; gluconeogenesis.</text>
</comment>
<comment type="subunit">
    <text evidence="1">Homotetramer.</text>
</comment>
<comment type="subcellular location">
    <subcellularLocation>
        <location evidence="1">Cytoplasm</location>
    </subcellularLocation>
</comment>
<comment type="similarity">
    <text evidence="1">Belongs to the FBPase class 1 family.</text>
</comment>
<keyword id="KW-0119">Carbohydrate metabolism</keyword>
<keyword id="KW-0963">Cytoplasm</keyword>
<keyword id="KW-0378">Hydrolase</keyword>
<keyword id="KW-0460">Magnesium</keyword>
<keyword id="KW-0479">Metal-binding</keyword>
<keyword id="KW-0614">Plasmid</keyword>
<name>F16PA_SINMW</name>
<organism>
    <name type="scientific">Sinorhizobium medicae (strain WSM419)</name>
    <name type="common">Ensifer medicae</name>
    <dbReference type="NCBI Taxonomy" id="366394"/>
    <lineage>
        <taxon>Bacteria</taxon>
        <taxon>Pseudomonadati</taxon>
        <taxon>Pseudomonadota</taxon>
        <taxon>Alphaproteobacteria</taxon>
        <taxon>Hyphomicrobiales</taxon>
        <taxon>Rhizobiaceae</taxon>
        <taxon>Sinorhizobium/Ensifer group</taxon>
        <taxon>Sinorhizobium</taxon>
    </lineage>
</organism>